<comment type="function">
    <text evidence="3">Involved in an anaerobic respiration pathway that converts the sulfonate isethionate (2-hydroxyethanesulfonate) to ammonia, acetate and sulfide. Catalyzes the radical-mediated C-S bond cleavage of isethionate (2-hydroxyethanesulfonate) to form sulfite and acetaldehyde. Shows no activity with taurine or ethanolamine as substrates.</text>
</comment>
<comment type="catalytic activity">
    <reaction evidence="3">
        <text>2-hydroxyethane-1-sulfonate = acetaldehyde + sulfite + H(+)</text>
        <dbReference type="Rhea" id="RHEA:60452"/>
        <dbReference type="ChEBI" id="CHEBI:15343"/>
        <dbReference type="ChEBI" id="CHEBI:15378"/>
        <dbReference type="ChEBI" id="CHEBI:17359"/>
        <dbReference type="ChEBI" id="CHEBI:61904"/>
        <dbReference type="EC" id="4.4.1.38"/>
    </reaction>
    <physiologicalReaction direction="left-to-right" evidence="6">
        <dbReference type="Rhea" id="RHEA:60453"/>
    </physiologicalReaction>
</comment>
<comment type="biophysicochemical properties">
    <kinetics>
        <KM evidence="3">44.8 mM for 2-hydroxyethane-1-sulfonate</KM>
        <text evidence="3">kcat is 91.6 sec(-1).</text>
    </kinetics>
</comment>
<comment type="pathway">
    <text evidence="6">Organosulfur degradation; alkanesulfonate degradation.</text>
</comment>
<comment type="subunit">
    <text evidence="3">Homodimer.</text>
</comment>
<comment type="PTM">
    <text evidence="3">Requires the activating protein IseH to generate the key active site glycyl radical on Gly-803 that is involved in catalysis.</text>
</comment>
<comment type="similarity">
    <text evidence="5">Belongs to the glycyl radical enzyme (GRE) family.</text>
</comment>
<sequence>MQCCNQLSPHEQRLQDKIEGKVDRYRATHERVFTILESFDNTRPRIDVERAKYFTESMKATEGQPLPLRWAKALMHIAENMTVYIDDHQLICGRAGYQGRYGVLYPELDGDFLGTAIEDLPNRAESPFAITPEDARVVVEEIAPFWKGKTYHEALNLALPADVHKLTYDDPQGLMSRFIVNETSSFRSSIQWVHDYEKVLKRGFRSIKEEALEKIAALDPMSPCDNVEKRPFLEAIVIVCDAIILWAKRHAKLAAELAAKETDPTRKRELETMAEICAWVPENPARTFHEAVQAQWFTQVFSRIEQKTGTIVSNGRMDQYFWPFYEKDLAEGRITEDSALELLECMWVGMAQYVDLYISPTGGAFNEGYAHWEAVTIGGQTPEGRDATNDLTYLFLKSKREFPLHYPDLAARIHSRSPERYLWEVAETIKDGSGFPKLINDEEVVPLYVSKGATFAEALDYAVSGCTEARMPNRDTYTSGGAYINFAAALEMVLYNGKMLKYGDTDLGAHTGDPCEFKTWEEFWNAYVTQHHLFLKTAFVQQHIINNLRARHFAQPMGSSLHDLCMKHCLDLHTPQIPEGINLGYFEYMGFGTVVDSLSAIKKLVFEDKKLTMGELIEALKCNFEGKEDIQQLLKSAPCYGNNDDYADSIARDIDALSVKYGRRYSPELGMHNDVRYVPFTSHVPFGRVVSATPNGRKAWSALSDGSSASHGADVNGPTAILQSNFNSKNYGMRDRAARMLNIKFTPKCVEGEEGSQKLVSFIRTFCDLKLWHVQFNVINKETLLAAQRDPEKYRNLIVRIAGYSAYFVDLSPDLQNDLIARTGHDVM</sequence>
<dbReference type="EC" id="4.4.1.38" evidence="3"/>
<dbReference type="EMBL" id="AE017285">
    <property type="protein sequence ID" value="AAS97296.1"/>
    <property type="molecule type" value="Genomic_DNA"/>
</dbReference>
<dbReference type="RefSeq" id="WP_010940090.1">
    <property type="nucleotide sequence ID" value="NC_002937.3"/>
</dbReference>
<dbReference type="RefSeq" id="YP_012036.1">
    <property type="nucleotide sequence ID" value="NC_002937.3"/>
</dbReference>
<dbReference type="PDB" id="5YMR">
    <property type="method" value="X-ray"/>
    <property type="resolution" value="2.40 A"/>
    <property type="chains" value="A/B/C/D=24-828"/>
</dbReference>
<dbReference type="PDBsum" id="5YMR"/>
<dbReference type="SMR" id="Q727N1"/>
<dbReference type="STRING" id="882.DVU_2824"/>
<dbReference type="PaxDb" id="882-DVU_2824"/>
<dbReference type="EnsemblBacteria" id="AAS97296">
    <property type="protein sequence ID" value="AAS97296"/>
    <property type="gene ID" value="DVU_2824"/>
</dbReference>
<dbReference type="KEGG" id="dvu:DVU_2824"/>
<dbReference type="PATRIC" id="fig|882.5.peg.2552"/>
<dbReference type="eggNOG" id="COG1882">
    <property type="taxonomic scope" value="Bacteria"/>
</dbReference>
<dbReference type="HOGENOM" id="CLU_009096_0_1_7"/>
<dbReference type="OrthoDB" id="9803969at2"/>
<dbReference type="PhylomeDB" id="Q727N1"/>
<dbReference type="BRENDA" id="4.4.1.38">
    <property type="organism ID" value="1914"/>
</dbReference>
<dbReference type="UniPathway" id="UPA00338"/>
<dbReference type="Proteomes" id="UP000002194">
    <property type="component" value="Chromosome"/>
</dbReference>
<dbReference type="GO" id="GO:0005829">
    <property type="term" value="C:cytosol"/>
    <property type="evidence" value="ECO:0007669"/>
    <property type="project" value="TreeGrafter"/>
</dbReference>
<dbReference type="GO" id="GO:0016829">
    <property type="term" value="F:lyase activity"/>
    <property type="evidence" value="ECO:0007669"/>
    <property type="project" value="UniProtKB-KW"/>
</dbReference>
<dbReference type="GO" id="GO:0016740">
    <property type="term" value="F:transferase activity"/>
    <property type="evidence" value="ECO:0007669"/>
    <property type="project" value="UniProtKB-KW"/>
</dbReference>
<dbReference type="GO" id="GO:0046306">
    <property type="term" value="P:alkanesulfonate catabolic process"/>
    <property type="evidence" value="ECO:0007669"/>
    <property type="project" value="UniProtKB-UniPathway"/>
</dbReference>
<dbReference type="CDD" id="cd01677">
    <property type="entry name" value="PFL2_DhaB_BssA"/>
    <property type="match status" value="1"/>
</dbReference>
<dbReference type="Gene3D" id="3.20.70.20">
    <property type="match status" value="1"/>
</dbReference>
<dbReference type="InterPro" id="IPR019777">
    <property type="entry name" value="Form_AcTrfase_GR_CS"/>
</dbReference>
<dbReference type="InterPro" id="IPR001150">
    <property type="entry name" value="Gly_radical"/>
</dbReference>
<dbReference type="InterPro" id="IPR051215">
    <property type="entry name" value="GRE"/>
</dbReference>
<dbReference type="InterPro" id="IPR004184">
    <property type="entry name" value="PFL_dom"/>
</dbReference>
<dbReference type="PANTHER" id="PTHR43641:SF2">
    <property type="entry name" value="DEHYDRATASE YBIW-RELATED"/>
    <property type="match status" value="1"/>
</dbReference>
<dbReference type="PANTHER" id="PTHR43641">
    <property type="entry name" value="FORMATE ACETYLTRANSFERASE 3-RELATED"/>
    <property type="match status" value="1"/>
</dbReference>
<dbReference type="Pfam" id="PF01228">
    <property type="entry name" value="Gly_radical"/>
    <property type="match status" value="1"/>
</dbReference>
<dbReference type="Pfam" id="PF02901">
    <property type="entry name" value="PFL-like"/>
    <property type="match status" value="1"/>
</dbReference>
<dbReference type="SUPFAM" id="SSF51998">
    <property type="entry name" value="PFL-like glycyl radical enzymes"/>
    <property type="match status" value="1"/>
</dbReference>
<dbReference type="PROSITE" id="PS00850">
    <property type="entry name" value="GLY_RADICAL_1"/>
    <property type="match status" value="1"/>
</dbReference>
<dbReference type="PROSITE" id="PS51149">
    <property type="entry name" value="GLY_RADICAL_2"/>
    <property type="match status" value="1"/>
</dbReference>
<dbReference type="PROSITE" id="PS51554">
    <property type="entry name" value="PFL"/>
    <property type="match status" value="1"/>
</dbReference>
<name>ISLA_NITV2</name>
<protein>
    <recommendedName>
        <fullName evidence="4">Isethionate sulfite-lyase</fullName>
        <ecNumber evidence="3">4.4.1.38</ecNumber>
    </recommendedName>
    <alternativeName>
        <fullName evidence="4">C-S lyase IseG</fullName>
    </alternativeName>
    <alternativeName>
        <fullName evidence="4">Glycyl radical enzyme IseG</fullName>
        <shortName evidence="4">GRE IseG</shortName>
    </alternativeName>
</protein>
<gene>
    <name evidence="4" type="primary">iseG</name>
    <name evidence="7" type="ordered locus">DVU_2824</name>
</gene>
<evidence type="ECO:0000255" key="1">
    <source>
        <dbReference type="PROSITE-ProRule" id="PRU00493"/>
    </source>
</evidence>
<evidence type="ECO:0000255" key="2">
    <source>
        <dbReference type="PROSITE-ProRule" id="PRU00887"/>
    </source>
</evidence>
<evidence type="ECO:0000269" key="3">
    <source>
    </source>
</evidence>
<evidence type="ECO:0000303" key="4">
    <source>
    </source>
</evidence>
<evidence type="ECO:0000305" key="5"/>
<evidence type="ECO:0000305" key="6">
    <source>
    </source>
</evidence>
<evidence type="ECO:0000312" key="7">
    <source>
        <dbReference type="EMBL" id="AAS97296.1"/>
    </source>
</evidence>
<evidence type="ECO:0007744" key="8">
    <source>
        <dbReference type="PDB" id="5YMR"/>
    </source>
</evidence>
<evidence type="ECO:0007829" key="9">
    <source>
        <dbReference type="PDB" id="5YMR"/>
    </source>
</evidence>
<reference key="1">
    <citation type="journal article" date="2004" name="Nat. Biotechnol.">
        <title>The genome sequence of the anaerobic, sulfate-reducing bacterium Desulfovibrio vulgaris Hildenborough.</title>
        <authorList>
            <person name="Heidelberg J.F."/>
            <person name="Seshadri R."/>
            <person name="Haveman S.A."/>
            <person name="Hemme C.L."/>
            <person name="Paulsen I.T."/>
            <person name="Kolonay J.F."/>
            <person name="Eisen J.A."/>
            <person name="Ward N.L."/>
            <person name="Methe B.A."/>
            <person name="Brinkac L.M."/>
            <person name="Daugherty S.C."/>
            <person name="DeBoy R.T."/>
            <person name="Dodson R.J."/>
            <person name="Durkin A.S."/>
            <person name="Madupu R."/>
            <person name="Nelson W.C."/>
            <person name="Sullivan S.A."/>
            <person name="Fouts D.E."/>
            <person name="Haft D.H."/>
            <person name="Selengut J."/>
            <person name="Peterson J.D."/>
            <person name="Davidsen T.M."/>
            <person name="Zafar N."/>
            <person name="Zhou L."/>
            <person name="Radune D."/>
            <person name="Dimitrov G."/>
            <person name="Hance M."/>
            <person name="Tran K."/>
            <person name="Khouri H.M."/>
            <person name="Gill J."/>
            <person name="Utterback T.R."/>
            <person name="Feldblyum T.V."/>
            <person name="Wall J.D."/>
            <person name="Voordouw G."/>
            <person name="Fraser C.M."/>
        </authorList>
    </citation>
    <scope>NUCLEOTIDE SEQUENCE [LARGE SCALE GENOMIC DNA]</scope>
    <source>
        <strain>ATCC 29579 / DSM 644 / CCUG 34227 / NCIMB 8303 / VKM B-1760 / Hildenborough</strain>
    </source>
</reference>
<reference evidence="8" key="2">
    <citation type="journal article" date="2019" name="Nat. Commun.">
        <title>Radical-mediated C-S bond cleavage in C2 sulfonate degradation by anaerobic bacteria.</title>
        <authorList>
            <person name="Xing M."/>
            <person name="Wei Y."/>
            <person name="Zhou Y."/>
            <person name="Zhang J."/>
            <person name="Lin L."/>
            <person name="Hu Y."/>
            <person name="Hua G."/>
            <person name="Urs A.N.N."/>
            <person name="Liu D."/>
            <person name="Wang F."/>
            <person name="Guo C."/>
            <person name="Tong Y."/>
            <person name="Li M."/>
            <person name="Liu Y."/>
            <person name="Ang E.L."/>
            <person name="Zhao H."/>
            <person name="Yuchi Z."/>
            <person name="Zhang Y."/>
        </authorList>
    </citation>
    <scope>X-RAY CRYSTALLOGRAPHY (2.40 ANGSTROMS) OF 24-828 IN COMPLEX WITH 2-HYDROXYETHANESULFONATE</scope>
    <scope>FUNCTION</scope>
    <scope>CATALYTIC ACTIVITY</scope>
    <scope>BIOPHYSICOCHEMICAL PROPERTIES</scope>
    <scope>SUBSTRATE SPECIFICITY</scope>
    <scope>SUBUNIT</scope>
    <scope>PATHWAY</scope>
    <scope>REACTION MECHANISM</scope>
    <scope>ACTIVE SITE</scope>
    <source>
        <strain>ATCC 29579 / DSM 644 / CCUG 34227 / NCIMB 8303 / VKM B-1760 / Hildenborough</strain>
    </source>
</reference>
<organism>
    <name type="scientific">Nitratidesulfovibrio vulgaris (strain ATCC 29579 / DSM 644 / CCUG 34227 / NCIMB 8303 / VKM B-1760 / Hildenborough)</name>
    <name type="common">Desulfovibrio vulgaris</name>
    <dbReference type="NCBI Taxonomy" id="882"/>
    <lineage>
        <taxon>Bacteria</taxon>
        <taxon>Pseudomonadati</taxon>
        <taxon>Thermodesulfobacteriota</taxon>
        <taxon>Desulfovibrionia</taxon>
        <taxon>Desulfovibrionales</taxon>
        <taxon>Desulfovibrionaceae</taxon>
        <taxon>Nitratidesulfovibrio</taxon>
    </lineage>
</organism>
<keyword id="KW-0002">3D-structure</keyword>
<keyword id="KW-0456">Lyase</keyword>
<keyword id="KW-0556">Organic radical</keyword>
<keyword id="KW-0670">Pyruvate</keyword>
<keyword id="KW-1185">Reference proteome</keyword>
<keyword id="KW-0808">Transferase</keyword>
<feature type="chain" id="PRO_0000450944" description="Isethionate sulfite-lyase">
    <location>
        <begin position="1"/>
        <end position="828"/>
    </location>
</feature>
<feature type="domain" description="PFL" evidence="2">
    <location>
        <begin position="30"/>
        <end position="698"/>
    </location>
</feature>
<feature type="domain" description="Glycine radical" evidence="1">
    <location>
        <begin position="705"/>
        <end position="828"/>
    </location>
</feature>
<feature type="active site" description="Cysteine radical intermediate" evidence="6">
    <location>
        <position position="466"/>
    </location>
</feature>
<feature type="active site" description="Proton acceptor" evidence="6">
    <location>
        <position position="468"/>
    </location>
</feature>
<feature type="binding site" evidence="3">
    <location>
        <position position="187"/>
    </location>
    <ligand>
        <name>2-hydroxyethane-1-sulfonate</name>
        <dbReference type="ChEBI" id="CHEBI:61904"/>
    </ligand>
</feature>
<feature type="binding site" evidence="3">
    <location>
        <position position="191"/>
    </location>
    <ligand>
        <name>2-hydroxyethane-1-sulfonate</name>
        <dbReference type="ChEBI" id="CHEBI:61904"/>
    </ligand>
</feature>
<feature type="binding site" evidence="3">
    <location>
        <begin position="466"/>
        <end position="468"/>
    </location>
    <ligand>
        <name>2-hydroxyethane-1-sulfonate</name>
        <dbReference type="ChEBI" id="CHEBI:61904"/>
    </ligand>
</feature>
<feature type="binding site" evidence="3">
    <location>
        <position position="676"/>
    </location>
    <ligand>
        <name>2-hydroxyethane-1-sulfonate</name>
        <dbReference type="ChEBI" id="CHEBI:61904"/>
    </ligand>
</feature>
<feature type="modified residue" description="Glycine radical" evidence="1">
    <location>
        <position position="803"/>
    </location>
</feature>
<feature type="helix" evidence="9">
    <location>
        <begin position="32"/>
        <end position="38"/>
    </location>
</feature>
<feature type="strand" evidence="9">
    <location>
        <begin position="45"/>
        <end position="47"/>
    </location>
</feature>
<feature type="helix" evidence="9">
    <location>
        <begin position="49"/>
        <end position="58"/>
    </location>
</feature>
<feature type="helix" evidence="9">
    <location>
        <begin position="66"/>
        <end position="80"/>
    </location>
</feature>
<feature type="strand" evidence="9">
    <location>
        <begin position="98"/>
        <end position="103"/>
    </location>
</feature>
<feature type="helix" evidence="9">
    <location>
        <begin position="106"/>
        <end position="109"/>
    </location>
</feature>
<feature type="helix" evidence="9">
    <location>
        <begin position="110"/>
        <end position="112"/>
    </location>
</feature>
<feature type="helix" evidence="9">
    <location>
        <begin position="113"/>
        <end position="119"/>
    </location>
</feature>
<feature type="helix" evidence="9">
    <location>
        <begin position="120"/>
        <end position="122"/>
    </location>
</feature>
<feature type="strand" evidence="9">
    <location>
        <begin position="124"/>
        <end position="126"/>
    </location>
</feature>
<feature type="helix" evidence="9">
    <location>
        <begin position="132"/>
        <end position="141"/>
    </location>
</feature>
<feature type="helix" evidence="9">
    <location>
        <begin position="143"/>
        <end position="146"/>
    </location>
</feature>
<feature type="turn" evidence="9">
    <location>
        <begin position="147"/>
        <end position="149"/>
    </location>
</feature>
<feature type="helix" evidence="9">
    <location>
        <begin position="151"/>
        <end position="158"/>
    </location>
</feature>
<feature type="helix" evidence="9">
    <location>
        <begin position="161"/>
        <end position="167"/>
    </location>
</feature>
<feature type="strand" evidence="9">
    <location>
        <begin position="168"/>
        <end position="170"/>
    </location>
</feature>
<feature type="strand" evidence="9">
    <location>
        <begin position="178"/>
        <end position="181"/>
    </location>
</feature>
<feature type="helix" evidence="9">
    <location>
        <begin position="184"/>
        <end position="186"/>
    </location>
</feature>
<feature type="strand" evidence="9">
    <location>
        <begin position="187"/>
        <end position="190"/>
    </location>
</feature>
<feature type="helix" evidence="9">
    <location>
        <begin position="196"/>
        <end position="202"/>
    </location>
</feature>
<feature type="helix" evidence="9">
    <location>
        <begin position="204"/>
        <end position="217"/>
    </location>
</feature>
<feature type="helix" evidence="9">
    <location>
        <begin position="223"/>
        <end position="227"/>
    </location>
</feature>
<feature type="helix" evidence="9">
    <location>
        <begin position="230"/>
        <end position="260"/>
    </location>
</feature>
<feature type="helix" evidence="9">
    <location>
        <begin position="264"/>
        <end position="279"/>
    </location>
</feature>
<feature type="turn" evidence="9">
    <location>
        <begin position="280"/>
        <end position="282"/>
    </location>
</feature>
<feature type="helix" evidence="9">
    <location>
        <begin position="288"/>
        <end position="305"/>
    </location>
</feature>
<feature type="helix" evidence="9">
    <location>
        <begin position="317"/>
        <end position="320"/>
    </location>
</feature>
<feature type="helix" evidence="9">
    <location>
        <begin position="322"/>
        <end position="330"/>
    </location>
</feature>
<feature type="helix" evidence="9">
    <location>
        <begin position="336"/>
        <end position="352"/>
    </location>
</feature>
<feature type="helix" evidence="9">
    <location>
        <begin position="360"/>
        <end position="364"/>
    </location>
</feature>
<feature type="turn" evidence="9">
    <location>
        <begin position="367"/>
        <end position="369"/>
    </location>
</feature>
<feature type="strand" evidence="9">
    <location>
        <begin position="375"/>
        <end position="380"/>
    </location>
</feature>
<feature type="strand" evidence="9">
    <location>
        <begin position="384"/>
        <end position="386"/>
    </location>
</feature>
<feature type="helix" evidence="9">
    <location>
        <begin position="390"/>
        <end position="401"/>
    </location>
</feature>
<feature type="strand" evidence="9">
    <location>
        <begin position="409"/>
        <end position="413"/>
    </location>
</feature>
<feature type="helix" evidence="9">
    <location>
        <begin position="419"/>
        <end position="429"/>
    </location>
</feature>
<feature type="strand" evidence="9">
    <location>
        <begin position="437"/>
        <end position="440"/>
    </location>
</feature>
<feature type="helix" evidence="9">
    <location>
        <begin position="441"/>
        <end position="450"/>
    </location>
</feature>
<feature type="helix" evidence="9">
    <location>
        <begin position="455"/>
        <end position="459"/>
    </location>
</feature>
<feature type="strand" evidence="9">
    <location>
        <begin position="462"/>
        <end position="464"/>
    </location>
</feature>
<feature type="turn" evidence="9">
    <location>
        <begin position="465"/>
        <end position="467"/>
    </location>
</feature>
<feature type="strand" evidence="9">
    <location>
        <begin position="468"/>
        <end position="470"/>
    </location>
</feature>
<feature type="turn" evidence="9">
    <location>
        <begin position="472"/>
        <end position="474"/>
    </location>
</feature>
<feature type="strand" evidence="9">
    <location>
        <begin position="483"/>
        <end position="485"/>
    </location>
</feature>
<feature type="helix" evidence="9">
    <location>
        <begin position="486"/>
        <end position="494"/>
    </location>
</feature>
<feature type="turn" evidence="9">
    <location>
        <begin position="495"/>
        <end position="497"/>
    </location>
</feature>
<feature type="helix" evidence="9">
    <location>
        <begin position="500"/>
        <end position="502"/>
    </location>
</feature>
<feature type="helix" evidence="9">
    <location>
        <begin position="514"/>
        <end position="516"/>
    </location>
</feature>
<feature type="helix" evidence="9">
    <location>
        <begin position="520"/>
        <end position="549"/>
    </location>
</feature>
<feature type="turn" evidence="9">
    <location>
        <begin position="550"/>
        <end position="552"/>
    </location>
</feature>
<feature type="helix" evidence="9">
    <location>
        <begin position="556"/>
        <end position="560"/>
    </location>
</feature>
<feature type="helix" evidence="9">
    <location>
        <begin position="563"/>
        <end position="568"/>
    </location>
</feature>
<feature type="strand" evidence="9">
    <location>
        <begin position="583"/>
        <end position="589"/>
    </location>
</feature>
<feature type="helix" evidence="9">
    <location>
        <begin position="591"/>
        <end position="604"/>
    </location>
</feature>
<feature type="turn" evidence="9">
    <location>
        <begin position="605"/>
        <end position="607"/>
    </location>
</feature>
<feature type="helix" evidence="9">
    <location>
        <begin position="613"/>
        <end position="621"/>
    </location>
</feature>
<feature type="turn" evidence="9">
    <location>
        <begin position="622"/>
        <end position="626"/>
    </location>
</feature>
<feature type="helix" evidence="9">
    <location>
        <begin position="628"/>
        <end position="634"/>
    </location>
</feature>
<feature type="helix" evidence="9">
    <location>
        <begin position="645"/>
        <end position="665"/>
    </location>
</feature>
<feature type="helix" evidence="9">
    <location>
        <begin position="667"/>
        <end position="669"/>
    </location>
</feature>
<feature type="strand" evidence="9">
    <location>
        <begin position="671"/>
        <end position="677"/>
    </location>
</feature>
<feature type="turn" evidence="9">
    <location>
        <begin position="680"/>
        <end position="682"/>
    </location>
</feature>
<feature type="helix" evidence="9">
    <location>
        <begin position="683"/>
        <end position="688"/>
    </location>
</feature>
<feature type="helix" evidence="9">
    <location>
        <begin position="719"/>
        <end position="727"/>
    </location>
</feature>
<feature type="strand" evidence="9">
    <location>
        <begin position="736"/>
        <end position="739"/>
    </location>
</feature>
<feature type="strand" evidence="9">
    <location>
        <begin position="742"/>
        <end position="745"/>
    </location>
</feature>
<feature type="helix" evidence="9">
    <location>
        <begin position="748"/>
        <end position="750"/>
    </location>
</feature>
<feature type="helix" evidence="9">
    <location>
        <begin position="752"/>
        <end position="768"/>
    </location>
</feature>
<feature type="strand" evidence="9">
    <location>
        <begin position="773"/>
        <end position="778"/>
    </location>
</feature>
<feature type="helix" evidence="9">
    <location>
        <begin position="781"/>
        <end position="789"/>
    </location>
</feature>
<feature type="turn" evidence="9">
    <location>
        <begin position="791"/>
        <end position="796"/>
    </location>
</feature>
<feature type="strand" evidence="9">
    <location>
        <begin position="798"/>
        <end position="800"/>
    </location>
</feature>
<feature type="strand" evidence="9">
    <location>
        <begin position="802"/>
        <end position="807"/>
    </location>
</feature>
<feature type="helix" evidence="9">
    <location>
        <begin position="808"/>
        <end position="810"/>
    </location>
</feature>
<feature type="helix" evidence="9">
    <location>
        <begin position="813"/>
        <end position="821"/>
    </location>
</feature>
<feature type="strand" evidence="9">
    <location>
        <begin position="824"/>
        <end position="826"/>
    </location>
</feature>
<accession>Q727N1</accession>
<proteinExistence type="evidence at protein level"/>